<sequence length="94" mass="10621">MTKSELIERLATQQSHIPAKAVEDAVKEMLEHMASTLAQGERIEIRGFGSFSLHYRAPRTGRNPKTGDKVELEGKYVPHFKPGKELRDRANIYG</sequence>
<reference key="1">
    <citation type="journal article" date="2009" name="PLoS ONE">
        <title>Salmonella paratyphi C: genetic divergence from Salmonella choleraesuis and pathogenic convergence with Salmonella typhi.</title>
        <authorList>
            <person name="Liu W.-Q."/>
            <person name="Feng Y."/>
            <person name="Wang Y."/>
            <person name="Zou Q.-H."/>
            <person name="Chen F."/>
            <person name="Guo J.-T."/>
            <person name="Peng Y.-H."/>
            <person name="Jin Y."/>
            <person name="Li Y.-G."/>
            <person name="Hu S.-N."/>
            <person name="Johnston R.N."/>
            <person name="Liu G.-R."/>
            <person name="Liu S.-L."/>
        </authorList>
    </citation>
    <scope>NUCLEOTIDE SEQUENCE [LARGE SCALE GENOMIC DNA]</scope>
    <source>
        <strain>RKS4594</strain>
    </source>
</reference>
<evidence type="ECO:0000255" key="1">
    <source>
        <dbReference type="HAMAP-Rule" id="MF_00381"/>
    </source>
</evidence>
<gene>
    <name evidence="1" type="primary">ihfB</name>
    <name evidence="1" type="synonym">himD</name>
    <name type="ordered locus">SPC_0981</name>
</gene>
<organism>
    <name type="scientific">Salmonella paratyphi C (strain RKS4594)</name>
    <dbReference type="NCBI Taxonomy" id="476213"/>
    <lineage>
        <taxon>Bacteria</taxon>
        <taxon>Pseudomonadati</taxon>
        <taxon>Pseudomonadota</taxon>
        <taxon>Gammaproteobacteria</taxon>
        <taxon>Enterobacterales</taxon>
        <taxon>Enterobacteriaceae</taxon>
        <taxon>Salmonella</taxon>
    </lineage>
</organism>
<name>IHFB_SALPC</name>
<feature type="chain" id="PRO_1000190447" description="Integration host factor subunit beta">
    <location>
        <begin position="1"/>
        <end position="94"/>
    </location>
</feature>
<comment type="function">
    <text evidence="1">This protein is one of the two subunits of integration host factor, a specific DNA-binding protein that functions in genetic recombination as well as in transcriptional and translational control.</text>
</comment>
<comment type="subunit">
    <text evidence="1">Heterodimer of an alpha and a beta chain.</text>
</comment>
<comment type="similarity">
    <text evidence="1">Belongs to the bacterial histone-like protein family.</text>
</comment>
<dbReference type="EMBL" id="CP000857">
    <property type="protein sequence ID" value="ACN45148.1"/>
    <property type="molecule type" value="Genomic_DNA"/>
</dbReference>
<dbReference type="RefSeq" id="WP_000167332.1">
    <property type="nucleotide sequence ID" value="NC_012125.1"/>
</dbReference>
<dbReference type="SMR" id="C0PXU8"/>
<dbReference type="GeneID" id="84237116"/>
<dbReference type="KEGG" id="sei:SPC_0981"/>
<dbReference type="HOGENOM" id="CLU_105066_2_0_6"/>
<dbReference type="Proteomes" id="UP000001599">
    <property type="component" value="Chromosome"/>
</dbReference>
<dbReference type="GO" id="GO:0005694">
    <property type="term" value="C:chromosome"/>
    <property type="evidence" value="ECO:0007669"/>
    <property type="project" value="InterPro"/>
</dbReference>
<dbReference type="GO" id="GO:0005829">
    <property type="term" value="C:cytosol"/>
    <property type="evidence" value="ECO:0007669"/>
    <property type="project" value="TreeGrafter"/>
</dbReference>
<dbReference type="GO" id="GO:0003677">
    <property type="term" value="F:DNA binding"/>
    <property type="evidence" value="ECO:0007669"/>
    <property type="project" value="UniProtKB-UniRule"/>
</dbReference>
<dbReference type="GO" id="GO:0030527">
    <property type="term" value="F:structural constituent of chromatin"/>
    <property type="evidence" value="ECO:0007669"/>
    <property type="project" value="InterPro"/>
</dbReference>
<dbReference type="GO" id="GO:0006310">
    <property type="term" value="P:DNA recombination"/>
    <property type="evidence" value="ECO:0007669"/>
    <property type="project" value="UniProtKB-UniRule"/>
</dbReference>
<dbReference type="GO" id="GO:0006355">
    <property type="term" value="P:regulation of DNA-templated transcription"/>
    <property type="evidence" value="ECO:0007669"/>
    <property type="project" value="UniProtKB-UniRule"/>
</dbReference>
<dbReference type="GO" id="GO:0006417">
    <property type="term" value="P:regulation of translation"/>
    <property type="evidence" value="ECO:0007669"/>
    <property type="project" value="UniProtKB-UniRule"/>
</dbReference>
<dbReference type="CDD" id="cd13836">
    <property type="entry name" value="IHF_B"/>
    <property type="match status" value="1"/>
</dbReference>
<dbReference type="FunFam" id="4.10.520.10:FF:000003">
    <property type="entry name" value="Integration host factor subunit beta"/>
    <property type="match status" value="1"/>
</dbReference>
<dbReference type="Gene3D" id="4.10.520.10">
    <property type="entry name" value="IHF-like DNA-binding proteins"/>
    <property type="match status" value="1"/>
</dbReference>
<dbReference type="HAMAP" id="MF_00381">
    <property type="entry name" value="IHF_beta"/>
    <property type="match status" value="1"/>
</dbReference>
<dbReference type="InterPro" id="IPR000119">
    <property type="entry name" value="Hist_DNA-bd"/>
</dbReference>
<dbReference type="InterPro" id="IPR020816">
    <property type="entry name" value="Histone-like_DNA-bd_CS"/>
</dbReference>
<dbReference type="InterPro" id="IPR010992">
    <property type="entry name" value="IHF-like_DNA-bd_dom_sf"/>
</dbReference>
<dbReference type="InterPro" id="IPR005685">
    <property type="entry name" value="IHF_beta"/>
</dbReference>
<dbReference type="NCBIfam" id="TIGR00988">
    <property type="entry name" value="hip"/>
    <property type="match status" value="1"/>
</dbReference>
<dbReference type="NCBIfam" id="NF001222">
    <property type="entry name" value="PRK00199.1"/>
    <property type="match status" value="1"/>
</dbReference>
<dbReference type="PANTHER" id="PTHR33175">
    <property type="entry name" value="DNA-BINDING PROTEIN HU"/>
    <property type="match status" value="1"/>
</dbReference>
<dbReference type="PANTHER" id="PTHR33175:SF5">
    <property type="entry name" value="INTEGRATION HOST FACTOR SUBUNIT BETA"/>
    <property type="match status" value="1"/>
</dbReference>
<dbReference type="Pfam" id="PF00216">
    <property type="entry name" value="Bac_DNA_binding"/>
    <property type="match status" value="1"/>
</dbReference>
<dbReference type="PRINTS" id="PR01727">
    <property type="entry name" value="DNABINDINGHU"/>
</dbReference>
<dbReference type="SMART" id="SM00411">
    <property type="entry name" value="BHL"/>
    <property type="match status" value="1"/>
</dbReference>
<dbReference type="SUPFAM" id="SSF47729">
    <property type="entry name" value="IHF-like DNA-binding proteins"/>
    <property type="match status" value="1"/>
</dbReference>
<dbReference type="PROSITE" id="PS00045">
    <property type="entry name" value="HISTONE_LIKE"/>
    <property type="match status" value="1"/>
</dbReference>
<accession>C0PXU8</accession>
<proteinExistence type="inferred from homology"/>
<keyword id="KW-0233">DNA recombination</keyword>
<keyword id="KW-0238">DNA-binding</keyword>
<keyword id="KW-0804">Transcription</keyword>
<keyword id="KW-0805">Transcription regulation</keyword>
<keyword id="KW-0810">Translation regulation</keyword>
<protein>
    <recommendedName>
        <fullName evidence="1">Integration host factor subunit beta</fullName>
        <shortName evidence="1">IHF-beta</shortName>
    </recommendedName>
</protein>